<gene>
    <name evidence="1" type="primary">eno</name>
    <name type="ordered locus">TM_0877</name>
</gene>
<name>ENO_THEMA</name>
<organism>
    <name type="scientific">Thermotoga maritima (strain ATCC 43589 / DSM 3109 / JCM 10099 / NBRC 100826 / MSB8)</name>
    <dbReference type="NCBI Taxonomy" id="243274"/>
    <lineage>
        <taxon>Bacteria</taxon>
        <taxon>Thermotogati</taxon>
        <taxon>Thermotogota</taxon>
        <taxon>Thermotogae</taxon>
        <taxon>Thermotogales</taxon>
        <taxon>Thermotogaceae</taxon>
        <taxon>Thermotoga</taxon>
    </lineage>
</organism>
<protein>
    <recommendedName>
        <fullName evidence="1">Enolase</fullName>
        <ecNumber evidence="1 2">4.2.1.11</ecNumber>
    </recommendedName>
    <alternativeName>
        <fullName evidence="1">2-phospho-D-glycerate hydro-lyase</fullName>
    </alternativeName>
    <alternativeName>
        <fullName evidence="1">2-phosphoglycerate dehydratase</fullName>
    </alternativeName>
</protein>
<comment type="function">
    <text evidence="1 2">Catalyzes the reversible conversion of 2-phosphoglycerate (2-PG) into phosphoenolpyruvate (PEP) (PubMed:7757011). It is essential for the degradation of carbohydrates via glycolysis.</text>
</comment>
<comment type="catalytic activity">
    <reaction evidence="1 2">
        <text>(2R)-2-phosphoglycerate = phosphoenolpyruvate + H2O</text>
        <dbReference type="Rhea" id="RHEA:10164"/>
        <dbReference type="ChEBI" id="CHEBI:15377"/>
        <dbReference type="ChEBI" id="CHEBI:58289"/>
        <dbReference type="ChEBI" id="CHEBI:58702"/>
        <dbReference type="EC" id="4.2.1.11"/>
    </reaction>
    <physiologicalReaction direction="left-to-right" evidence="2">
        <dbReference type="Rhea" id="RHEA:10165"/>
    </physiologicalReaction>
</comment>
<comment type="cofactor">
    <cofactor evidence="1 2">
        <name>Mg(2+)</name>
        <dbReference type="ChEBI" id="CHEBI:18420"/>
    </cofactor>
    <text evidence="1">Binds a second Mg(2+) ion via substrate during catalysis.</text>
</comment>
<comment type="activity regulation">
    <text evidence="2">Inhibited by fluoride and phosphate.</text>
</comment>
<comment type="biophysicochemical properties">
    <kinetics>
        <KM evidence="2">0.07 mM for 2-phospho-D-glycerate (at 75 degrees Celsius)</KM>
        <KM evidence="2">0.03 mM for magnesium (at 75 degrees Celsius)</KM>
    </kinetics>
    <phDependence>
        <text evidence="2">Optimum pH is 7.5.</text>
    </phDependence>
    <temperatureDependence>
        <text evidence="2">Optimum temperature is 90 degrees Celsius.</text>
    </temperatureDependence>
</comment>
<comment type="pathway">
    <text evidence="1">Carbohydrate degradation; glycolysis; pyruvate from D-glyceraldehyde 3-phosphate: step 4/5.</text>
</comment>
<comment type="subunit">
    <text evidence="2">Homooctamer. Forms a ring-shaped particle.</text>
</comment>
<comment type="subcellular location">
    <subcellularLocation>
        <location evidence="1">Cytoplasm</location>
    </subcellularLocation>
    <subcellularLocation>
        <location evidence="1">Secreted</location>
    </subcellularLocation>
    <subcellularLocation>
        <location evidence="1">Cell surface</location>
    </subcellularLocation>
    <text evidence="1">Fractions of enolase are present in both the cytoplasm and on the cell surface.</text>
</comment>
<comment type="similarity">
    <text evidence="1">Belongs to the enolase family.</text>
</comment>
<comment type="sequence caution" evidence="3">
    <conflict type="erroneous initiation">
        <sequence resource="EMBL-CDS" id="AAD35958"/>
    </conflict>
    <text>Truncated N-terminus.</text>
</comment>
<reference key="1">
    <citation type="journal article" date="1999" name="Nature">
        <title>Evidence for lateral gene transfer between Archaea and Bacteria from genome sequence of Thermotoga maritima.</title>
        <authorList>
            <person name="Nelson K.E."/>
            <person name="Clayton R.A."/>
            <person name="Gill S.R."/>
            <person name="Gwinn M.L."/>
            <person name="Dodson R.J."/>
            <person name="Haft D.H."/>
            <person name="Hickey E.K."/>
            <person name="Peterson J.D."/>
            <person name="Nelson W.C."/>
            <person name="Ketchum K.A."/>
            <person name="McDonald L.A."/>
            <person name="Utterback T.R."/>
            <person name="Malek J.A."/>
            <person name="Linher K.D."/>
            <person name="Garrett M.M."/>
            <person name="Stewart A.M."/>
            <person name="Cotton M.D."/>
            <person name="Pratt M.S."/>
            <person name="Phillips C.A."/>
            <person name="Richardson D.L."/>
            <person name="Heidelberg J.F."/>
            <person name="Sutton G.G."/>
            <person name="Fleischmann R.D."/>
            <person name="Eisen J.A."/>
            <person name="White O."/>
            <person name="Salzberg S.L."/>
            <person name="Smith H.O."/>
            <person name="Venter J.C."/>
            <person name="Fraser C.M."/>
        </authorList>
    </citation>
    <scope>NUCLEOTIDE SEQUENCE [LARGE SCALE GENOMIC DNA]</scope>
    <source>
        <strain>ATCC 43589 / DSM 3109 / JCM 10099 / NBRC 100826 / MSB8</strain>
    </source>
</reference>
<reference key="2">
    <citation type="journal article" date="1995" name="Protein Sci.">
        <title>Octameric enolase from the hyperthermophilic bacterium Thermotoga maritima: purification, characterization, and image processing.</title>
        <authorList>
            <person name="Schurig H."/>
            <person name="Rutkat K."/>
            <person name="Rachel R."/>
            <person name="Jaenicke R."/>
        </authorList>
    </citation>
    <scope>PROTEIN SEQUENCE OF 1-24</scope>
    <scope>FUNCTION</scope>
    <scope>CATALYTIC ACTIVITY</scope>
    <scope>COFACTOR</scope>
    <scope>ACTIVITY REGULATION</scope>
    <scope>SUBUNIT</scope>
    <scope>BIOPHYSICOCHEMICAL PROPERTIES</scope>
    <source>
        <strain>ATCC 43589 / DSM 3109 / JCM 10099 / NBRC 100826 / MSB8</strain>
    </source>
</reference>
<feature type="chain" id="PRO_0000133994" description="Enolase">
    <location>
        <begin position="1"/>
        <end position="429"/>
    </location>
</feature>
<feature type="active site" description="Proton donor" evidence="1">
    <location>
        <position position="206"/>
    </location>
</feature>
<feature type="active site" description="Proton acceptor" evidence="1">
    <location>
        <position position="338"/>
    </location>
</feature>
<feature type="binding site" evidence="1">
    <location>
        <position position="164"/>
    </location>
    <ligand>
        <name>(2R)-2-phosphoglycerate</name>
        <dbReference type="ChEBI" id="CHEBI:58289"/>
    </ligand>
</feature>
<feature type="binding site" evidence="1">
    <location>
        <position position="243"/>
    </location>
    <ligand>
        <name>Mg(2+)</name>
        <dbReference type="ChEBI" id="CHEBI:18420"/>
    </ligand>
</feature>
<feature type="binding site" evidence="1">
    <location>
        <position position="286"/>
    </location>
    <ligand>
        <name>Mg(2+)</name>
        <dbReference type="ChEBI" id="CHEBI:18420"/>
    </ligand>
</feature>
<feature type="binding site" evidence="1">
    <location>
        <position position="313"/>
    </location>
    <ligand>
        <name>Mg(2+)</name>
        <dbReference type="ChEBI" id="CHEBI:18420"/>
    </ligand>
</feature>
<feature type="binding site" evidence="1">
    <location>
        <position position="338"/>
    </location>
    <ligand>
        <name>(2R)-2-phosphoglycerate</name>
        <dbReference type="ChEBI" id="CHEBI:58289"/>
    </ligand>
</feature>
<feature type="binding site" evidence="1">
    <location>
        <position position="367"/>
    </location>
    <ligand>
        <name>(2R)-2-phosphoglycerate</name>
        <dbReference type="ChEBI" id="CHEBI:58289"/>
    </ligand>
</feature>
<feature type="binding site" evidence="1">
    <location>
        <position position="368"/>
    </location>
    <ligand>
        <name>(2R)-2-phosphoglycerate</name>
        <dbReference type="ChEBI" id="CHEBI:58289"/>
    </ligand>
</feature>
<feature type="binding site" evidence="1">
    <location>
        <position position="389"/>
    </location>
    <ligand>
        <name>(2R)-2-phosphoglycerate</name>
        <dbReference type="ChEBI" id="CHEBI:58289"/>
    </ligand>
</feature>
<dbReference type="EC" id="4.2.1.11" evidence="1 2"/>
<dbReference type="EMBL" id="AE000512">
    <property type="protein sequence ID" value="AAD35958.1"/>
    <property type="status" value="ALT_INIT"/>
    <property type="molecule type" value="Genomic_DNA"/>
</dbReference>
<dbReference type="PIR" id="G72323">
    <property type="entry name" value="G72323"/>
</dbReference>
<dbReference type="RefSeq" id="NP_228685.1">
    <property type="nucleotide sequence ID" value="NC_000853.1"/>
</dbReference>
<dbReference type="RefSeq" id="WP_004080719.1">
    <property type="nucleotide sequence ID" value="NZ_CP011107.1"/>
</dbReference>
<dbReference type="SMR" id="P42848"/>
<dbReference type="FunCoup" id="P42848">
    <property type="interactions" value="286"/>
</dbReference>
<dbReference type="STRING" id="243274.TM_0877"/>
<dbReference type="PaxDb" id="243274-THEMA_00250"/>
<dbReference type="EnsemblBacteria" id="AAD35958">
    <property type="protein sequence ID" value="AAD35958"/>
    <property type="gene ID" value="TM_0877"/>
</dbReference>
<dbReference type="KEGG" id="tma:TM0877"/>
<dbReference type="KEGG" id="tmi:THEMA_00250"/>
<dbReference type="KEGG" id="tmw:THMA_0899"/>
<dbReference type="PATRIC" id="fig|243274.18.peg.50"/>
<dbReference type="eggNOG" id="COG0148">
    <property type="taxonomic scope" value="Bacteria"/>
</dbReference>
<dbReference type="InParanoid" id="P42848"/>
<dbReference type="OrthoDB" id="9804716at2"/>
<dbReference type="UniPathway" id="UPA00109">
    <property type="reaction ID" value="UER00187"/>
</dbReference>
<dbReference type="Proteomes" id="UP000008183">
    <property type="component" value="Chromosome"/>
</dbReference>
<dbReference type="GO" id="GO:0009986">
    <property type="term" value="C:cell surface"/>
    <property type="evidence" value="ECO:0007669"/>
    <property type="project" value="UniProtKB-SubCell"/>
</dbReference>
<dbReference type="GO" id="GO:0005576">
    <property type="term" value="C:extracellular region"/>
    <property type="evidence" value="ECO:0007669"/>
    <property type="project" value="UniProtKB-SubCell"/>
</dbReference>
<dbReference type="GO" id="GO:0000015">
    <property type="term" value="C:phosphopyruvate hydratase complex"/>
    <property type="evidence" value="ECO:0000318"/>
    <property type="project" value="GO_Central"/>
</dbReference>
<dbReference type="GO" id="GO:0000287">
    <property type="term" value="F:magnesium ion binding"/>
    <property type="evidence" value="ECO:0007669"/>
    <property type="project" value="UniProtKB-UniRule"/>
</dbReference>
<dbReference type="GO" id="GO:0004634">
    <property type="term" value="F:phosphopyruvate hydratase activity"/>
    <property type="evidence" value="ECO:0000318"/>
    <property type="project" value="GO_Central"/>
</dbReference>
<dbReference type="GO" id="GO:0006096">
    <property type="term" value="P:glycolytic process"/>
    <property type="evidence" value="ECO:0000318"/>
    <property type="project" value="GO_Central"/>
</dbReference>
<dbReference type="CDD" id="cd03313">
    <property type="entry name" value="enolase"/>
    <property type="match status" value="1"/>
</dbReference>
<dbReference type="FunFam" id="3.20.20.120:FF:000001">
    <property type="entry name" value="Enolase"/>
    <property type="match status" value="1"/>
</dbReference>
<dbReference type="FunFam" id="3.30.390.10:FF:000001">
    <property type="entry name" value="Enolase"/>
    <property type="match status" value="1"/>
</dbReference>
<dbReference type="Gene3D" id="3.20.20.120">
    <property type="entry name" value="Enolase-like C-terminal domain"/>
    <property type="match status" value="1"/>
</dbReference>
<dbReference type="Gene3D" id="3.30.390.10">
    <property type="entry name" value="Enolase-like, N-terminal domain"/>
    <property type="match status" value="1"/>
</dbReference>
<dbReference type="HAMAP" id="MF_00318">
    <property type="entry name" value="Enolase"/>
    <property type="match status" value="1"/>
</dbReference>
<dbReference type="InterPro" id="IPR000941">
    <property type="entry name" value="Enolase"/>
</dbReference>
<dbReference type="InterPro" id="IPR036849">
    <property type="entry name" value="Enolase-like_C_sf"/>
</dbReference>
<dbReference type="InterPro" id="IPR029017">
    <property type="entry name" value="Enolase-like_N"/>
</dbReference>
<dbReference type="InterPro" id="IPR020810">
    <property type="entry name" value="Enolase_C"/>
</dbReference>
<dbReference type="InterPro" id="IPR020809">
    <property type="entry name" value="Enolase_CS"/>
</dbReference>
<dbReference type="InterPro" id="IPR020811">
    <property type="entry name" value="Enolase_N"/>
</dbReference>
<dbReference type="NCBIfam" id="TIGR01060">
    <property type="entry name" value="eno"/>
    <property type="match status" value="1"/>
</dbReference>
<dbReference type="PANTHER" id="PTHR11902">
    <property type="entry name" value="ENOLASE"/>
    <property type="match status" value="1"/>
</dbReference>
<dbReference type="PANTHER" id="PTHR11902:SF1">
    <property type="entry name" value="ENOLASE"/>
    <property type="match status" value="1"/>
</dbReference>
<dbReference type="Pfam" id="PF00113">
    <property type="entry name" value="Enolase_C"/>
    <property type="match status" value="1"/>
</dbReference>
<dbReference type="Pfam" id="PF03952">
    <property type="entry name" value="Enolase_N"/>
    <property type="match status" value="1"/>
</dbReference>
<dbReference type="PIRSF" id="PIRSF001400">
    <property type="entry name" value="Enolase"/>
    <property type="match status" value="1"/>
</dbReference>
<dbReference type="PRINTS" id="PR00148">
    <property type="entry name" value="ENOLASE"/>
</dbReference>
<dbReference type="SFLD" id="SFLDS00001">
    <property type="entry name" value="Enolase"/>
    <property type="match status" value="1"/>
</dbReference>
<dbReference type="SFLD" id="SFLDF00002">
    <property type="entry name" value="enolase"/>
    <property type="match status" value="1"/>
</dbReference>
<dbReference type="SMART" id="SM01192">
    <property type="entry name" value="Enolase_C"/>
    <property type="match status" value="1"/>
</dbReference>
<dbReference type="SMART" id="SM01193">
    <property type="entry name" value="Enolase_N"/>
    <property type="match status" value="1"/>
</dbReference>
<dbReference type="SUPFAM" id="SSF51604">
    <property type="entry name" value="Enolase C-terminal domain-like"/>
    <property type="match status" value="1"/>
</dbReference>
<dbReference type="SUPFAM" id="SSF54826">
    <property type="entry name" value="Enolase N-terminal domain-like"/>
    <property type="match status" value="1"/>
</dbReference>
<dbReference type="PROSITE" id="PS00164">
    <property type="entry name" value="ENOLASE"/>
    <property type="match status" value="1"/>
</dbReference>
<evidence type="ECO:0000255" key="1">
    <source>
        <dbReference type="HAMAP-Rule" id="MF_00318"/>
    </source>
</evidence>
<evidence type="ECO:0000269" key="2">
    <source>
    </source>
</evidence>
<evidence type="ECO:0000305" key="3"/>
<proteinExistence type="evidence at protein level"/>
<sequence>MYVEIVDVRAREVLDSRGNPTVEAEVVLEDGTMGRAIVPSGASTGKFEALEIRDKDKKRYLGKGVLKAVENVNETIAPALIGMNAFDQPLVDKTLIELDGTENKSKLGANAILAVSMAVARAAANYLGLPLYKYLGGVNAKVLPVPLMNVINGGQHADNNLDLQEFMIVPAGFDSFREALRAGAEIFHTLKKILHEAGHVTAVGDEGGFAPNLSSNEEAIKVLIEAIEKAGYKPGEEVFIALDCAASSFYDEEKGVYYVDGEEKSSEVLMGYYEELVAKYPIISIEDPFAEEDWDAFVEFTKRVGNKVQIVGDDLYVTNVKRLSKGIELKATNSILIKLNQIGTVTETLDAVEMAQKNNMTAIISHRSGESEDTFIADLAVATNAGFIKTGSLSRSERIAKYNQLLRIEEELGKVAEFRGLKSFYSIKR</sequence>
<keyword id="KW-0963">Cytoplasm</keyword>
<keyword id="KW-0903">Direct protein sequencing</keyword>
<keyword id="KW-0324">Glycolysis</keyword>
<keyword id="KW-0456">Lyase</keyword>
<keyword id="KW-0460">Magnesium</keyword>
<keyword id="KW-0479">Metal-binding</keyword>
<keyword id="KW-1185">Reference proteome</keyword>
<keyword id="KW-0964">Secreted</keyword>
<accession>P42848</accession>